<evidence type="ECO:0000250" key="1"/>
<evidence type="ECO:0000255" key="2"/>
<evidence type="ECO:0000305" key="3"/>
<protein>
    <recommendedName>
        <fullName>Imidazole glycerol phosphate synthase subunit HisF</fullName>
        <ecNumber>4.3.2.10</ecNumber>
    </recommendedName>
    <alternativeName>
        <fullName>IGP synthase cyclase subunit</fullName>
    </alternativeName>
    <alternativeName>
        <fullName>IGP synthase subunit HisF</fullName>
    </alternativeName>
    <alternativeName>
        <fullName>ImGP synthase subunit HisF</fullName>
        <shortName>IGPS subunit HisF</shortName>
    </alternativeName>
</protein>
<reference key="1">
    <citation type="journal article" date="2000" name="DNA Res.">
        <title>Complete genome structure of the nitrogen-fixing symbiotic bacterium Mesorhizobium loti.</title>
        <authorList>
            <person name="Kaneko T."/>
            <person name="Nakamura Y."/>
            <person name="Sato S."/>
            <person name="Asamizu E."/>
            <person name="Kato T."/>
            <person name="Sasamoto S."/>
            <person name="Watanabe A."/>
            <person name="Idesawa K."/>
            <person name="Ishikawa A."/>
            <person name="Kawashima K."/>
            <person name="Kimura T."/>
            <person name="Kishida Y."/>
            <person name="Kiyokawa C."/>
            <person name="Kohara M."/>
            <person name="Matsumoto M."/>
            <person name="Matsuno A."/>
            <person name="Mochizuki Y."/>
            <person name="Nakayama S."/>
            <person name="Nakazaki N."/>
            <person name="Shimpo S."/>
            <person name="Sugimoto M."/>
            <person name="Takeuchi C."/>
            <person name="Yamada M."/>
            <person name="Tabata S."/>
        </authorList>
    </citation>
    <scope>NUCLEOTIDE SEQUENCE [LARGE SCALE GENOMIC DNA]</scope>
    <source>
        <strain>LMG 29417 / CECT 9101 / MAFF 303099</strain>
    </source>
</reference>
<accession>Q98CT1</accession>
<proteinExistence type="inferred from homology"/>
<comment type="function">
    <text evidence="1">IGPS catalyzes the conversion of PRFAR and glutamine to IGP, AICAR and glutamate. The HisF subunit catalyzes the cyclization activity that produces IGP and AICAR from PRFAR using the ammonia provided by the HisH subunit (By similarity).</text>
</comment>
<comment type="catalytic activity">
    <reaction>
        <text>5-[(5-phospho-1-deoxy-D-ribulos-1-ylimino)methylamino]-1-(5-phospho-beta-D-ribosyl)imidazole-4-carboxamide + L-glutamine = D-erythro-1-(imidazol-4-yl)glycerol 3-phosphate + 5-amino-1-(5-phospho-beta-D-ribosyl)imidazole-4-carboxamide + L-glutamate + H(+)</text>
        <dbReference type="Rhea" id="RHEA:24793"/>
        <dbReference type="ChEBI" id="CHEBI:15378"/>
        <dbReference type="ChEBI" id="CHEBI:29985"/>
        <dbReference type="ChEBI" id="CHEBI:58278"/>
        <dbReference type="ChEBI" id="CHEBI:58359"/>
        <dbReference type="ChEBI" id="CHEBI:58475"/>
        <dbReference type="ChEBI" id="CHEBI:58525"/>
        <dbReference type="EC" id="4.3.2.10"/>
    </reaction>
</comment>
<comment type="pathway">
    <text>Amino-acid biosynthesis; L-histidine biosynthesis; L-histidine from 5-phospho-alpha-D-ribose 1-diphosphate: step 5/9.</text>
</comment>
<comment type="subunit">
    <text evidence="1">Heterodimer of HisH and HisF.</text>
</comment>
<comment type="subcellular location">
    <subcellularLocation>
        <location evidence="1">Cytoplasm</location>
    </subcellularLocation>
</comment>
<comment type="similarity">
    <text evidence="3">Belongs to the HisA/HisF family.</text>
</comment>
<gene>
    <name type="primary">hisF</name>
    <name type="ordered locus">mlr5016</name>
</gene>
<feature type="chain" id="PRO_0000142216" description="Imidazole glycerol phosphate synthase subunit HisF">
    <location>
        <begin position="1"/>
        <end position="263"/>
    </location>
</feature>
<feature type="active site" evidence="2">
    <location>
        <position position="11"/>
    </location>
</feature>
<feature type="active site" evidence="2">
    <location>
        <position position="130"/>
    </location>
</feature>
<dbReference type="EC" id="4.3.2.10"/>
<dbReference type="EMBL" id="BA000012">
    <property type="protein sequence ID" value="BAB51540.1"/>
    <property type="molecule type" value="Genomic_DNA"/>
</dbReference>
<dbReference type="SMR" id="Q98CT1"/>
<dbReference type="KEGG" id="mlo:mlr5016"/>
<dbReference type="eggNOG" id="COG0107">
    <property type="taxonomic scope" value="Bacteria"/>
</dbReference>
<dbReference type="HOGENOM" id="CLU_048577_4_0_5"/>
<dbReference type="UniPathway" id="UPA00031">
    <property type="reaction ID" value="UER00010"/>
</dbReference>
<dbReference type="Proteomes" id="UP000000552">
    <property type="component" value="Chromosome"/>
</dbReference>
<dbReference type="GO" id="GO:0005737">
    <property type="term" value="C:cytoplasm"/>
    <property type="evidence" value="ECO:0007669"/>
    <property type="project" value="UniProtKB-SubCell"/>
</dbReference>
<dbReference type="GO" id="GO:0000107">
    <property type="term" value="F:imidazoleglycerol-phosphate synthase activity"/>
    <property type="evidence" value="ECO:0007669"/>
    <property type="project" value="UniProtKB-UniRule"/>
</dbReference>
<dbReference type="GO" id="GO:0016829">
    <property type="term" value="F:lyase activity"/>
    <property type="evidence" value="ECO:0007669"/>
    <property type="project" value="UniProtKB-KW"/>
</dbReference>
<dbReference type="GO" id="GO:0000105">
    <property type="term" value="P:L-histidine biosynthetic process"/>
    <property type="evidence" value="ECO:0007669"/>
    <property type="project" value="UniProtKB-UniRule"/>
</dbReference>
<dbReference type="CDD" id="cd04731">
    <property type="entry name" value="HisF"/>
    <property type="match status" value="1"/>
</dbReference>
<dbReference type="FunFam" id="3.20.20.70:FF:000006">
    <property type="entry name" value="Imidazole glycerol phosphate synthase subunit HisF"/>
    <property type="match status" value="1"/>
</dbReference>
<dbReference type="Gene3D" id="3.20.20.70">
    <property type="entry name" value="Aldolase class I"/>
    <property type="match status" value="1"/>
</dbReference>
<dbReference type="HAMAP" id="MF_01013">
    <property type="entry name" value="HisF"/>
    <property type="match status" value="1"/>
</dbReference>
<dbReference type="InterPro" id="IPR013785">
    <property type="entry name" value="Aldolase_TIM"/>
</dbReference>
<dbReference type="InterPro" id="IPR006062">
    <property type="entry name" value="His_biosynth"/>
</dbReference>
<dbReference type="InterPro" id="IPR004651">
    <property type="entry name" value="HisF"/>
</dbReference>
<dbReference type="InterPro" id="IPR050064">
    <property type="entry name" value="IGPS_HisA/HisF"/>
</dbReference>
<dbReference type="InterPro" id="IPR011060">
    <property type="entry name" value="RibuloseP-bd_barrel"/>
</dbReference>
<dbReference type="NCBIfam" id="TIGR00735">
    <property type="entry name" value="hisF"/>
    <property type="match status" value="1"/>
</dbReference>
<dbReference type="PANTHER" id="PTHR21235:SF2">
    <property type="entry name" value="IMIDAZOLE GLYCEROL PHOSPHATE SYNTHASE HISHF"/>
    <property type="match status" value="1"/>
</dbReference>
<dbReference type="PANTHER" id="PTHR21235">
    <property type="entry name" value="IMIDAZOLE GLYCEROL PHOSPHATE SYNTHASE SUBUNIT HISF/H IGP SYNTHASE SUBUNIT HISF/H"/>
    <property type="match status" value="1"/>
</dbReference>
<dbReference type="Pfam" id="PF00977">
    <property type="entry name" value="His_biosynth"/>
    <property type="match status" value="1"/>
</dbReference>
<dbReference type="SUPFAM" id="SSF51366">
    <property type="entry name" value="Ribulose-phoshate binding barrel"/>
    <property type="match status" value="1"/>
</dbReference>
<organism>
    <name type="scientific">Mesorhizobium japonicum (strain LMG 29417 / CECT 9101 / MAFF 303099)</name>
    <name type="common">Mesorhizobium loti (strain MAFF 303099)</name>
    <dbReference type="NCBI Taxonomy" id="266835"/>
    <lineage>
        <taxon>Bacteria</taxon>
        <taxon>Pseudomonadati</taxon>
        <taxon>Pseudomonadota</taxon>
        <taxon>Alphaproteobacteria</taxon>
        <taxon>Hyphomicrobiales</taxon>
        <taxon>Phyllobacteriaceae</taxon>
        <taxon>Mesorhizobium</taxon>
    </lineage>
</organism>
<sequence>MLKARVIPCLDVKDGRVVKGVNFVDLIDAGDPVEAAKAYDAAGADELCFLDITASSDNRETIFDVIARTAEQCFMPLTVGGGVRQVADIRKLLLAGADKVSINTAAVKNPDFVAEAADKFGNQCIVVAIDAKKVSGAGEADRWEIFTHGGREKTGIDAVEFARKMVDRGAGEILLTSMDRDGTKAGYDIALTRAIADAVRAPIIASGGVGTLDHLVEGIRDGHAGAVLAASIFHFGTYTIAQAKAHMAAAGLPMRLDSSGDRP</sequence>
<keyword id="KW-0028">Amino-acid biosynthesis</keyword>
<keyword id="KW-0963">Cytoplasm</keyword>
<keyword id="KW-0368">Histidine biosynthesis</keyword>
<keyword id="KW-0456">Lyase</keyword>
<name>HIS6_RHILO</name>